<name>FABZ_ESCF3</name>
<reference key="1">
    <citation type="journal article" date="2009" name="PLoS Genet.">
        <title>Organised genome dynamics in the Escherichia coli species results in highly diverse adaptive paths.</title>
        <authorList>
            <person name="Touchon M."/>
            <person name="Hoede C."/>
            <person name="Tenaillon O."/>
            <person name="Barbe V."/>
            <person name="Baeriswyl S."/>
            <person name="Bidet P."/>
            <person name="Bingen E."/>
            <person name="Bonacorsi S."/>
            <person name="Bouchier C."/>
            <person name="Bouvet O."/>
            <person name="Calteau A."/>
            <person name="Chiapello H."/>
            <person name="Clermont O."/>
            <person name="Cruveiller S."/>
            <person name="Danchin A."/>
            <person name="Diard M."/>
            <person name="Dossat C."/>
            <person name="Karoui M.E."/>
            <person name="Frapy E."/>
            <person name="Garry L."/>
            <person name="Ghigo J.M."/>
            <person name="Gilles A.M."/>
            <person name="Johnson J."/>
            <person name="Le Bouguenec C."/>
            <person name="Lescat M."/>
            <person name="Mangenot S."/>
            <person name="Martinez-Jehanne V."/>
            <person name="Matic I."/>
            <person name="Nassif X."/>
            <person name="Oztas S."/>
            <person name="Petit M.A."/>
            <person name="Pichon C."/>
            <person name="Rouy Z."/>
            <person name="Ruf C.S."/>
            <person name="Schneider D."/>
            <person name="Tourret J."/>
            <person name="Vacherie B."/>
            <person name="Vallenet D."/>
            <person name="Medigue C."/>
            <person name="Rocha E.P.C."/>
            <person name="Denamur E."/>
        </authorList>
    </citation>
    <scope>NUCLEOTIDE SEQUENCE [LARGE SCALE GENOMIC DNA]</scope>
    <source>
        <strain>ATCC 35469 / DSM 13698 / BCRC 15582 / CCUG 18766 / IAM 14443 / JCM 21226 / LMG 7866 / NBRC 102419 / NCTC 12128 / CDC 0568-73</strain>
    </source>
</reference>
<comment type="function">
    <text evidence="1">Involved in unsaturated fatty acids biosynthesis. Catalyzes the dehydration of short chain beta-hydroxyacyl-ACPs and long chain saturated and unsaturated beta-hydroxyacyl-ACPs.</text>
</comment>
<comment type="catalytic activity">
    <reaction evidence="1">
        <text>a (3R)-hydroxyacyl-[ACP] = a (2E)-enoyl-[ACP] + H2O</text>
        <dbReference type="Rhea" id="RHEA:13097"/>
        <dbReference type="Rhea" id="RHEA-COMP:9925"/>
        <dbReference type="Rhea" id="RHEA-COMP:9945"/>
        <dbReference type="ChEBI" id="CHEBI:15377"/>
        <dbReference type="ChEBI" id="CHEBI:78784"/>
        <dbReference type="ChEBI" id="CHEBI:78827"/>
        <dbReference type="EC" id="4.2.1.59"/>
    </reaction>
</comment>
<comment type="subunit">
    <text evidence="1">Oligomer.</text>
</comment>
<comment type="subcellular location">
    <subcellularLocation>
        <location evidence="1">Cytoplasm</location>
    </subcellularLocation>
</comment>
<comment type="PTM">
    <text evidence="1">The N-terminus is blocked.</text>
</comment>
<comment type="similarity">
    <text evidence="1">Belongs to the thioester dehydratase family. FabZ subfamily.</text>
</comment>
<feature type="chain" id="PRO_1000123638" description="3-hydroxyacyl-[acyl-carrier-protein] dehydratase FabZ">
    <location>
        <begin position="1"/>
        <end position="151"/>
    </location>
</feature>
<feature type="active site" evidence="1">
    <location>
        <position position="54"/>
    </location>
</feature>
<evidence type="ECO:0000255" key="1">
    <source>
        <dbReference type="HAMAP-Rule" id="MF_00406"/>
    </source>
</evidence>
<sequence>MTTNTHTLQIEEILELLPHRFPFLLVDRVLDFEEGRFLRAVKNVSVNEPFFQGHFPGKPIFPGVLILEAMAQATGILAFKSVGKLEPGELYYFAGIDEARFKRPVVPGDQMIMEVTFEKTRRGLTRFKGVALVDGKVVCEATMMCARSREA</sequence>
<gene>
    <name evidence="1" type="primary">fabZ</name>
    <name type="ordered locus">EFER_0203</name>
</gene>
<accession>B7LW77</accession>
<proteinExistence type="inferred from homology"/>
<keyword id="KW-0963">Cytoplasm</keyword>
<keyword id="KW-0441">Lipid A biosynthesis</keyword>
<keyword id="KW-0444">Lipid biosynthesis</keyword>
<keyword id="KW-0443">Lipid metabolism</keyword>
<keyword id="KW-0456">Lyase</keyword>
<dbReference type="EC" id="4.2.1.59" evidence="1"/>
<dbReference type="EMBL" id="CU928158">
    <property type="protein sequence ID" value="CAQ87783.1"/>
    <property type="molecule type" value="Genomic_DNA"/>
</dbReference>
<dbReference type="RefSeq" id="WP_000210739.1">
    <property type="nucleotide sequence ID" value="NC_011740.1"/>
</dbReference>
<dbReference type="SMR" id="B7LW77"/>
<dbReference type="GeneID" id="93777245"/>
<dbReference type="KEGG" id="efe:EFER_0203"/>
<dbReference type="HOGENOM" id="CLU_078912_1_0_6"/>
<dbReference type="OrthoDB" id="9772788at2"/>
<dbReference type="Proteomes" id="UP000000745">
    <property type="component" value="Chromosome"/>
</dbReference>
<dbReference type="GO" id="GO:0005737">
    <property type="term" value="C:cytoplasm"/>
    <property type="evidence" value="ECO:0007669"/>
    <property type="project" value="UniProtKB-SubCell"/>
</dbReference>
<dbReference type="GO" id="GO:0016020">
    <property type="term" value="C:membrane"/>
    <property type="evidence" value="ECO:0007669"/>
    <property type="project" value="GOC"/>
</dbReference>
<dbReference type="GO" id="GO:0019171">
    <property type="term" value="F:(3R)-hydroxyacyl-[acyl-carrier-protein] dehydratase activity"/>
    <property type="evidence" value="ECO:0007669"/>
    <property type="project" value="UniProtKB-EC"/>
</dbReference>
<dbReference type="GO" id="GO:0006633">
    <property type="term" value="P:fatty acid biosynthetic process"/>
    <property type="evidence" value="ECO:0007669"/>
    <property type="project" value="UniProtKB-UniRule"/>
</dbReference>
<dbReference type="GO" id="GO:0009245">
    <property type="term" value="P:lipid A biosynthetic process"/>
    <property type="evidence" value="ECO:0007669"/>
    <property type="project" value="UniProtKB-UniRule"/>
</dbReference>
<dbReference type="CDD" id="cd01288">
    <property type="entry name" value="FabZ"/>
    <property type="match status" value="1"/>
</dbReference>
<dbReference type="FunFam" id="3.10.129.10:FF:000001">
    <property type="entry name" value="3-hydroxyacyl-[acyl-carrier-protein] dehydratase FabZ"/>
    <property type="match status" value="1"/>
</dbReference>
<dbReference type="Gene3D" id="3.10.129.10">
    <property type="entry name" value="Hotdog Thioesterase"/>
    <property type="match status" value="1"/>
</dbReference>
<dbReference type="HAMAP" id="MF_00406">
    <property type="entry name" value="FabZ"/>
    <property type="match status" value="1"/>
</dbReference>
<dbReference type="InterPro" id="IPR013114">
    <property type="entry name" value="FabA_FabZ"/>
</dbReference>
<dbReference type="InterPro" id="IPR010084">
    <property type="entry name" value="FabZ"/>
</dbReference>
<dbReference type="InterPro" id="IPR029069">
    <property type="entry name" value="HotDog_dom_sf"/>
</dbReference>
<dbReference type="NCBIfam" id="TIGR01750">
    <property type="entry name" value="fabZ"/>
    <property type="match status" value="1"/>
</dbReference>
<dbReference type="NCBIfam" id="NF000582">
    <property type="entry name" value="PRK00006.1"/>
    <property type="match status" value="1"/>
</dbReference>
<dbReference type="PANTHER" id="PTHR30272">
    <property type="entry name" value="3-HYDROXYACYL-[ACYL-CARRIER-PROTEIN] DEHYDRATASE"/>
    <property type="match status" value="1"/>
</dbReference>
<dbReference type="PANTHER" id="PTHR30272:SF1">
    <property type="entry name" value="3-HYDROXYACYL-[ACYL-CARRIER-PROTEIN] DEHYDRATASE"/>
    <property type="match status" value="1"/>
</dbReference>
<dbReference type="Pfam" id="PF07977">
    <property type="entry name" value="FabA"/>
    <property type="match status" value="1"/>
</dbReference>
<dbReference type="SUPFAM" id="SSF54637">
    <property type="entry name" value="Thioesterase/thiol ester dehydrase-isomerase"/>
    <property type="match status" value="1"/>
</dbReference>
<protein>
    <recommendedName>
        <fullName evidence="1">3-hydroxyacyl-[acyl-carrier-protein] dehydratase FabZ</fullName>
        <ecNumber evidence="1">4.2.1.59</ecNumber>
    </recommendedName>
    <alternativeName>
        <fullName evidence="1">(3R)-hydroxymyristoyl-[acyl-carrier-protein] dehydratase</fullName>
        <shortName evidence="1">(3R)-hydroxymyristoyl-ACP dehydrase</shortName>
    </alternativeName>
    <alternativeName>
        <fullName evidence="1">Beta-hydroxyacyl-ACP dehydratase</fullName>
    </alternativeName>
</protein>
<organism>
    <name type="scientific">Escherichia fergusonii (strain ATCC 35469 / DSM 13698 / CCUG 18766 / IAM 14443 / JCM 21226 / LMG 7866 / NBRC 102419 / NCTC 12128 / CDC 0568-73)</name>
    <dbReference type="NCBI Taxonomy" id="585054"/>
    <lineage>
        <taxon>Bacteria</taxon>
        <taxon>Pseudomonadati</taxon>
        <taxon>Pseudomonadota</taxon>
        <taxon>Gammaproteobacteria</taxon>
        <taxon>Enterobacterales</taxon>
        <taxon>Enterobacteriaceae</taxon>
        <taxon>Escherichia</taxon>
    </lineage>
</organism>